<proteinExistence type="inferred from homology"/>
<keyword id="KW-0227">DNA damage</keyword>
<keyword id="KW-0234">DNA repair</keyword>
<keyword id="KW-0235">DNA replication</keyword>
<keyword id="KW-0436">Ligase</keyword>
<keyword id="KW-0460">Magnesium</keyword>
<keyword id="KW-0464">Manganese</keyword>
<keyword id="KW-0479">Metal-binding</keyword>
<keyword id="KW-0520">NAD</keyword>
<keyword id="KW-0862">Zinc</keyword>
<protein>
    <recommendedName>
        <fullName evidence="1">DNA ligase</fullName>
        <ecNumber evidence="1">6.5.1.2</ecNumber>
    </recommendedName>
    <alternativeName>
        <fullName evidence="1">Polydeoxyribonucleotide synthase [NAD(+)]</fullName>
    </alternativeName>
</protein>
<accession>Q47SC6</accession>
<sequence>MRNHGPGSERKDACVSAPDPTFSDDVPADVRERHARLSQDLDDYSYRYYLGSPIISDAEYDQLMAELRDLEAQYPSLVTPDSPTQKVGAPISNEFAPVEHLERMQSLDNAFSDAQLEAWAHRVSAEVPVDAFLCELKIDGLAVALVYEKGRLVRAATRGDGRIGEDITLNIRTIDTVPLRLDESRYPAPELLEVRGEVFLPVKAFEQLNSRLADEGKPPFANPRNAAAGSLRQKDPRVTASRPLSMLVHGIGAHRGVTITHQSQSYELLAAWGLPVSDRIRVVSTLDEVREYIAYYAEHRHDPEYEIDGVVVKVDDVSLQRRLGSTSRAPRWAIAYKYPPEEVTTKLLDIKTSVGRTGRVTPYAVLEPVKVAGSEVEFATLHNAQEVARKGVLIGDTVVVRKAGDIIPEVVGPVVEKRTGTERPFVMPTECPECGSPLGQQKEGDVDLRCPNTRYCKGQLRERLAFIAGRKALDIEALGYVAATALTQPLEPAEPPLRDEGDLFSLTVEQLLPIRTLVLDPDTAEPKIDPKTGKPKVVSFFANQKGEPKKIVEKLFQQLEEAKKRPLWRVLVALSIRHVGPRAAEDLARHFRSLDAIAQASEEELEAVEGIGPTIARSIVDWFSVDWHREIVEKWRAAGVRMEEEGADDGPRLLDGITTVITGTLEKYSRDGAKEAVQKLGGRVTGSVSRKTDFVVVGANPGSKYDKAVKLGVPILDEAGFEVLLTQGPEAARAARLSEDESVLS</sequence>
<gene>
    <name evidence="1" type="primary">ligA</name>
    <name type="ordered locus">Tfu_0603</name>
</gene>
<evidence type="ECO:0000255" key="1">
    <source>
        <dbReference type="HAMAP-Rule" id="MF_01588"/>
    </source>
</evidence>
<evidence type="ECO:0000256" key="2">
    <source>
        <dbReference type="SAM" id="MobiDB-lite"/>
    </source>
</evidence>
<dbReference type="EC" id="6.5.1.2" evidence="1"/>
<dbReference type="EMBL" id="CP000088">
    <property type="protein sequence ID" value="AAZ54641.1"/>
    <property type="molecule type" value="Genomic_DNA"/>
</dbReference>
<dbReference type="SMR" id="Q47SC6"/>
<dbReference type="STRING" id="269800.Tfu_0603"/>
<dbReference type="KEGG" id="tfu:Tfu_0603"/>
<dbReference type="eggNOG" id="COG0272">
    <property type="taxonomic scope" value="Bacteria"/>
</dbReference>
<dbReference type="HOGENOM" id="CLU_007764_2_1_11"/>
<dbReference type="GO" id="GO:0005829">
    <property type="term" value="C:cytosol"/>
    <property type="evidence" value="ECO:0007669"/>
    <property type="project" value="TreeGrafter"/>
</dbReference>
<dbReference type="GO" id="GO:0003677">
    <property type="term" value="F:DNA binding"/>
    <property type="evidence" value="ECO:0007669"/>
    <property type="project" value="InterPro"/>
</dbReference>
<dbReference type="GO" id="GO:0003911">
    <property type="term" value="F:DNA ligase (NAD+) activity"/>
    <property type="evidence" value="ECO:0007669"/>
    <property type="project" value="UniProtKB-UniRule"/>
</dbReference>
<dbReference type="GO" id="GO:0046872">
    <property type="term" value="F:metal ion binding"/>
    <property type="evidence" value="ECO:0007669"/>
    <property type="project" value="UniProtKB-KW"/>
</dbReference>
<dbReference type="GO" id="GO:0006281">
    <property type="term" value="P:DNA repair"/>
    <property type="evidence" value="ECO:0007669"/>
    <property type="project" value="UniProtKB-KW"/>
</dbReference>
<dbReference type="GO" id="GO:0006260">
    <property type="term" value="P:DNA replication"/>
    <property type="evidence" value="ECO:0007669"/>
    <property type="project" value="UniProtKB-KW"/>
</dbReference>
<dbReference type="CDD" id="cd17748">
    <property type="entry name" value="BRCT_DNA_ligase_like"/>
    <property type="match status" value="1"/>
</dbReference>
<dbReference type="CDD" id="cd00114">
    <property type="entry name" value="LIGANc"/>
    <property type="match status" value="1"/>
</dbReference>
<dbReference type="FunFam" id="1.10.150.20:FF:000006">
    <property type="entry name" value="DNA ligase"/>
    <property type="match status" value="1"/>
</dbReference>
<dbReference type="FunFam" id="2.40.50.140:FF:000012">
    <property type="entry name" value="DNA ligase"/>
    <property type="match status" value="1"/>
</dbReference>
<dbReference type="FunFam" id="3.30.470.30:FF:000001">
    <property type="entry name" value="DNA ligase"/>
    <property type="match status" value="1"/>
</dbReference>
<dbReference type="FunFam" id="3.40.50.10190:FF:000054">
    <property type="entry name" value="DNA ligase"/>
    <property type="match status" value="1"/>
</dbReference>
<dbReference type="Gene3D" id="6.20.10.30">
    <property type="match status" value="1"/>
</dbReference>
<dbReference type="Gene3D" id="1.10.150.20">
    <property type="entry name" value="5' to 3' exonuclease, C-terminal subdomain"/>
    <property type="match status" value="2"/>
</dbReference>
<dbReference type="Gene3D" id="3.40.50.10190">
    <property type="entry name" value="BRCT domain"/>
    <property type="match status" value="1"/>
</dbReference>
<dbReference type="Gene3D" id="3.30.470.30">
    <property type="entry name" value="DNA ligase/mRNA capping enzyme"/>
    <property type="match status" value="1"/>
</dbReference>
<dbReference type="Gene3D" id="1.10.287.610">
    <property type="entry name" value="Helix hairpin bin"/>
    <property type="match status" value="1"/>
</dbReference>
<dbReference type="Gene3D" id="2.40.50.140">
    <property type="entry name" value="Nucleic acid-binding proteins"/>
    <property type="match status" value="1"/>
</dbReference>
<dbReference type="HAMAP" id="MF_01588">
    <property type="entry name" value="DNA_ligase_A"/>
    <property type="match status" value="1"/>
</dbReference>
<dbReference type="InterPro" id="IPR001357">
    <property type="entry name" value="BRCT_dom"/>
</dbReference>
<dbReference type="InterPro" id="IPR036420">
    <property type="entry name" value="BRCT_dom_sf"/>
</dbReference>
<dbReference type="InterPro" id="IPR041663">
    <property type="entry name" value="DisA/LigA_HHH"/>
</dbReference>
<dbReference type="InterPro" id="IPR001679">
    <property type="entry name" value="DNA_ligase"/>
</dbReference>
<dbReference type="InterPro" id="IPR018239">
    <property type="entry name" value="DNA_ligase_AS"/>
</dbReference>
<dbReference type="InterPro" id="IPR033136">
    <property type="entry name" value="DNA_ligase_CS"/>
</dbReference>
<dbReference type="InterPro" id="IPR013839">
    <property type="entry name" value="DNAligase_adenylation"/>
</dbReference>
<dbReference type="InterPro" id="IPR013840">
    <property type="entry name" value="DNAligase_N"/>
</dbReference>
<dbReference type="InterPro" id="IPR003583">
    <property type="entry name" value="Hlx-hairpin-Hlx_DNA-bd_motif"/>
</dbReference>
<dbReference type="InterPro" id="IPR012340">
    <property type="entry name" value="NA-bd_OB-fold"/>
</dbReference>
<dbReference type="InterPro" id="IPR004150">
    <property type="entry name" value="NAD_DNA_ligase_OB"/>
</dbReference>
<dbReference type="InterPro" id="IPR010994">
    <property type="entry name" value="RuvA_2-like"/>
</dbReference>
<dbReference type="InterPro" id="IPR004149">
    <property type="entry name" value="Znf_DNAligase_C4"/>
</dbReference>
<dbReference type="NCBIfam" id="TIGR00575">
    <property type="entry name" value="dnlj"/>
    <property type="match status" value="1"/>
</dbReference>
<dbReference type="NCBIfam" id="NF005932">
    <property type="entry name" value="PRK07956.1"/>
    <property type="match status" value="1"/>
</dbReference>
<dbReference type="PANTHER" id="PTHR23389">
    <property type="entry name" value="CHROMOSOME TRANSMISSION FIDELITY FACTOR 18"/>
    <property type="match status" value="1"/>
</dbReference>
<dbReference type="PANTHER" id="PTHR23389:SF9">
    <property type="entry name" value="DNA LIGASE"/>
    <property type="match status" value="1"/>
</dbReference>
<dbReference type="Pfam" id="PF00533">
    <property type="entry name" value="BRCT"/>
    <property type="match status" value="1"/>
</dbReference>
<dbReference type="Pfam" id="PF01653">
    <property type="entry name" value="DNA_ligase_aden"/>
    <property type="match status" value="1"/>
</dbReference>
<dbReference type="Pfam" id="PF03120">
    <property type="entry name" value="DNA_ligase_OB"/>
    <property type="match status" value="1"/>
</dbReference>
<dbReference type="Pfam" id="PF03119">
    <property type="entry name" value="DNA_ligase_ZBD"/>
    <property type="match status" value="1"/>
</dbReference>
<dbReference type="Pfam" id="PF12826">
    <property type="entry name" value="HHH_2"/>
    <property type="match status" value="1"/>
</dbReference>
<dbReference type="PIRSF" id="PIRSF001604">
    <property type="entry name" value="LigA"/>
    <property type="match status" value="1"/>
</dbReference>
<dbReference type="SMART" id="SM00292">
    <property type="entry name" value="BRCT"/>
    <property type="match status" value="1"/>
</dbReference>
<dbReference type="SMART" id="SM00278">
    <property type="entry name" value="HhH1"/>
    <property type="match status" value="2"/>
</dbReference>
<dbReference type="SMART" id="SM00532">
    <property type="entry name" value="LIGANc"/>
    <property type="match status" value="1"/>
</dbReference>
<dbReference type="SUPFAM" id="SSF52113">
    <property type="entry name" value="BRCT domain"/>
    <property type="match status" value="1"/>
</dbReference>
<dbReference type="SUPFAM" id="SSF56091">
    <property type="entry name" value="DNA ligase/mRNA capping enzyme, catalytic domain"/>
    <property type="match status" value="1"/>
</dbReference>
<dbReference type="SUPFAM" id="SSF50249">
    <property type="entry name" value="Nucleic acid-binding proteins"/>
    <property type="match status" value="1"/>
</dbReference>
<dbReference type="SUPFAM" id="SSF47781">
    <property type="entry name" value="RuvA domain 2-like"/>
    <property type="match status" value="1"/>
</dbReference>
<dbReference type="PROSITE" id="PS50172">
    <property type="entry name" value="BRCT"/>
    <property type="match status" value="1"/>
</dbReference>
<dbReference type="PROSITE" id="PS01055">
    <property type="entry name" value="DNA_LIGASE_N1"/>
    <property type="match status" value="1"/>
</dbReference>
<dbReference type="PROSITE" id="PS01056">
    <property type="entry name" value="DNA_LIGASE_N2"/>
    <property type="match status" value="1"/>
</dbReference>
<name>DNLJ_THEFY</name>
<organism>
    <name type="scientific">Thermobifida fusca (strain YX)</name>
    <dbReference type="NCBI Taxonomy" id="269800"/>
    <lineage>
        <taxon>Bacteria</taxon>
        <taxon>Bacillati</taxon>
        <taxon>Actinomycetota</taxon>
        <taxon>Actinomycetes</taxon>
        <taxon>Streptosporangiales</taxon>
        <taxon>Nocardiopsidaceae</taxon>
        <taxon>Thermobifida</taxon>
    </lineage>
</organism>
<feature type="chain" id="PRO_0000313492" description="DNA ligase">
    <location>
        <begin position="1"/>
        <end position="745"/>
    </location>
</feature>
<feature type="domain" description="BRCT" evidence="1">
    <location>
        <begin position="649"/>
        <end position="738"/>
    </location>
</feature>
<feature type="region of interest" description="Disordered" evidence="2">
    <location>
        <begin position="1"/>
        <end position="27"/>
    </location>
</feature>
<feature type="region of interest" description="Disordered" evidence="2">
    <location>
        <begin position="216"/>
        <end position="235"/>
    </location>
</feature>
<feature type="active site" description="N6-AMP-lysine intermediate" evidence="1">
    <location>
        <position position="137"/>
    </location>
</feature>
<feature type="binding site" evidence="1">
    <location>
        <begin position="57"/>
        <end position="61"/>
    </location>
    <ligand>
        <name>NAD(+)</name>
        <dbReference type="ChEBI" id="CHEBI:57540"/>
    </ligand>
</feature>
<feature type="binding site" evidence="1">
    <location>
        <begin position="106"/>
        <end position="107"/>
    </location>
    <ligand>
        <name>NAD(+)</name>
        <dbReference type="ChEBI" id="CHEBI:57540"/>
    </ligand>
</feature>
<feature type="binding site" evidence="1">
    <location>
        <position position="135"/>
    </location>
    <ligand>
        <name>NAD(+)</name>
        <dbReference type="ChEBI" id="CHEBI:57540"/>
    </ligand>
</feature>
<feature type="binding site" evidence="1">
    <location>
        <position position="158"/>
    </location>
    <ligand>
        <name>NAD(+)</name>
        <dbReference type="ChEBI" id="CHEBI:57540"/>
    </ligand>
</feature>
<feature type="binding site" evidence="1">
    <location>
        <position position="197"/>
    </location>
    <ligand>
        <name>NAD(+)</name>
        <dbReference type="ChEBI" id="CHEBI:57540"/>
    </ligand>
</feature>
<feature type="binding site" evidence="1">
    <location>
        <position position="313"/>
    </location>
    <ligand>
        <name>NAD(+)</name>
        <dbReference type="ChEBI" id="CHEBI:57540"/>
    </ligand>
</feature>
<feature type="binding site" evidence="1">
    <location>
        <position position="337"/>
    </location>
    <ligand>
        <name>NAD(+)</name>
        <dbReference type="ChEBI" id="CHEBI:57540"/>
    </ligand>
</feature>
<feature type="binding site" evidence="1">
    <location>
        <position position="431"/>
    </location>
    <ligand>
        <name>Zn(2+)</name>
        <dbReference type="ChEBI" id="CHEBI:29105"/>
    </ligand>
</feature>
<feature type="binding site" evidence="1">
    <location>
        <position position="434"/>
    </location>
    <ligand>
        <name>Zn(2+)</name>
        <dbReference type="ChEBI" id="CHEBI:29105"/>
    </ligand>
</feature>
<feature type="binding site" evidence="1">
    <location>
        <position position="450"/>
    </location>
    <ligand>
        <name>Zn(2+)</name>
        <dbReference type="ChEBI" id="CHEBI:29105"/>
    </ligand>
</feature>
<feature type="binding site" evidence="1">
    <location>
        <position position="456"/>
    </location>
    <ligand>
        <name>Zn(2+)</name>
        <dbReference type="ChEBI" id="CHEBI:29105"/>
    </ligand>
</feature>
<comment type="function">
    <text evidence="1">DNA ligase that catalyzes the formation of phosphodiester linkages between 5'-phosphoryl and 3'-hydroxyl groups in double-stranded DNA using NAD as a coenzyme and as the energy source for the reaction. It is essential for DNA replication and repair of damaged DNA.</text>
</comment>
<comment type="catalytic activity">
    <reaction evidence="1">
        <text>NAD(+) + (deoxyribonucleotide)n-3'-hydroxyl + 5'-phospho-(deoxyribonucleotide)m = (deoxyribonucleotide)n+m + AMP + beta-nicotinamide D-nucleotide.</text>
        <dbReference type="EC" id="6.5.1.2"/>
    </reaction>
</comment>
<comment type="cofactor">
    <cofactor evidence="1">
        <name>Mg(2+)</name>
        <dbReference type="ChEBI" id="CHEBI:18420"/>
    </cofactor>
    <cofactor evidence="1">
        <name>Mn(2+)</name>
        <dbReference type="ChEBI" id="CHEBI:29035"/>
    </cofactor>
</comment>
<comment type="similarity">
    <text evidence="1">Belongs to the NAD-dependent DNA ligase family. LigA subfamily.</text>
</comment>
<reference key="1">
    <citation type="journal article" date="2007" name="J. Bacteriol.">
        <title>Genome sequence and analysis of the soil cellulolytic actinomycete Thermobifida fusca YX.</title>
        <authorList>
            <person name="Lykidis A."/>
            <person name="Mavromatis K."/>
            <person name="Ivanova N."/>
            <person name="Anderson I."/>
            <person name="Land M."/>
            <person name="DiBartolo G."/>
            <person name="Martinez M."/>
            <person name="Lapidus A."/>
            <person name="Lucas S."/>
            <person name="Copeland A."/>
            <person name="Richardson P."/>
            <person name="Wilson D.B."/>
            <person name="Kyrpides N."/>
        </authorList>
    </citation>
    <scope>NUCLEOTIDE SEQUENCE [LARGE SCALE GENOMIC DNA]</scope>
    <source>
        <strain>YX</strain>
    </source>
</reference>